<name>FLGI_VIBCM</name>
<evidence type="ECO:0000255" key="1">
    <source>
        <dbReference type="HAMAP-Rule" id="MF_00416"/>
    </source>
</evidence>
<reference key="1">
    <citation type="journal article" date="2008" name="PLoS ONE">
        <title>A recalibrated molecular clock and independent origins for the cholera pandemic clones.</title>
        <authorList>
            <person name="Feng L."/>
            <person name="Reeves P.R."/>
            <person name="Lan R."/>
            <person name="Ren Y."/>
            <person name="Gao C."/>
            <person name="Zhou Z."/>
            <person name="Ren Y."/>
            <person name="Cheng J."/>
            <person name="Wang W."/>
            <person name="Wang J."/>
            <person name="Qian W."/>
            <person name="Li D."/>
            <person name="Wang L."/>
        </authorList>
    </citation>
    <scope>NUCLEOTIDE SEQUENCE [LARGE SCALE GENOMIC DNA]</scope>
    <source>
        <strain>M66-2</strain>
    </source>
</reference>
<feature type="signal peptide" evidence="1">
    <location>
        <begin position="1"/>
        <end position="18"/>
    </location>
</feature>
<feature type="chain" id="PRO_1000134843" description="Flagellar P-ring protein">
    <location>
        <begin position="19"/>
        <end position="361"/>
    </location>
</feature>
<dbReference type="EMBL" id="CP001233">
    <property type="protein sequence ID" value="ACP06417.1"/>
    <property type="molecule type" value="Genomic_DNA"/>
</dbReference>
<dbReference type="RefSeq" id="WP_001225051.1">
    <property type="nucleotide sequence ID" value="NC_012578.1"/>
</dbReference>
<dbReference type="SMR" id="C3LPJ7"/>
<dbReference type="KEGG" id="vcm:VCM66_2116"/>
<dbReference type="HOGENOM" id="CLU_045235_1_0_6"/>
<dbReference type="Proteomes" id="UP000001217">
    <property type="component" value="Chromosome I"/>
</dbReference>
<dbReference type="GO" id="GO:0009428">
    <property type="term" value="C:bacterial-type flagellum basal body, distal rod, P ring"/>
    <property type="evidence" value="ECO:0007669"/>
    <property type="project" value="InterPro"/>
</dbReference>
<dbReference type="GO" id="GO:0030288">
    <property type="term" value="C:outer membrane-bounded periplasmic space"/>
    <property type="evidence" value="ECO:0007669"/>
    <property type="project" value="InterPro"/>
</dbReference>
<dbReference type="GO" id="GO:0005198">
    <property type="term" value="F:structural molecule activity"/>
    <property type="evidence" value="ECO:0007669"/>
    <property type="project" value="InterPro"/>
</dbReference>
<dbReference type="GO" id="GO:0071973">
    <property type="term" value="P:bacterial-type flagellum-dependent cell motility"/>
    <property type="evidence" value="ECO:0007669"/>
    <property type="project" value="InterPro"/>
</dbReference>
<dbReference type="HAMAP" id="MF_00416">
    <property type="entry name" value="FlgI"/>
    <property type="match status" value="1"/>
</dbReference>
<dbReference type="InterPro" id="IPR001782">
    <property type="entry name" value="Flag_FlgI"/>
</dbReference>
<dbReference type="NCBIfam" id="NF003676">
    <property type="entry name" value="PRK05303.1"/>
    <property type="match status" value="1"/>
</dbReference>
<dbReference type="PANTHER" id="PTHR30381">
    <property type="entry name" value="FLAGELLAR P-RING PERIPLASMIC PROTEIN FLGI"/>
    <property type="match status" value="1"/>
</dbReference>
<dbReference type="PANTHER" id="PTHR30381:SF0">
    <property type="entry name" value="FLAGELLAR P-RING PROTEIN"/>
    <property type="match status" value="1"/>
</dbReference>
<dbReference type="Pfam" id="PF02119">
    <property type="entry name" value="FlgI"/>
    <property type="match status" value="1"/>
</dbReference>
<dbReference type="PRINTS" id="PR01010">
    <property type="entry name" value="FLGPRINGFLGI"/>
</dbReference>
<proteinExistence type="inferred from homology"/>
<accession>C3LPJ7</accession>
<gene>
    <name evidence="1" type="primary">flgI</name>
    <name type="ordered locus">VCM66_2116</name>
</gene>
<sequence length="361" mass="37663">MRKFTILLMLLLASSAQAARIKDVAQVAGVRNNQLVGYGLVTGLPGTGESTPFTDQSFNAMLQSFGIQLPPGTKPKTKNVAAVIVTADLPAFSKQGQTIDITVSSIGSAKSLRGGTLMQTFLKGLDGQVYAVAQGNLVVSGFSATGADGSKIVGNNPTVGMISSGAIVEREVPNPFGRGDYITFNLFESDFTTAQRLADAVNQFLGPQMASAVDAASIKVRAPRDLSQRVAFLSAIENLEFNPADSAAKIIVNSRTGTIVVGQNVRLKPAAVTHGGMTVAIKENLNVSQPNALGGGQTVVVPNTEIEVTEKQGKMFKLEPGVTLDDLVRAVNEVGAAPSDLMAILQALKQAGAIEGQLIII</sequence>
<organism>
    <name type="scientific">Vibrio cholerae serotype O1 (strain M66-2)</name>
    <dbReference type="NCBI Taxonomy" id="579112"/>
    <lineage>
        <taxon>Bacteria</taxon>
        <taxon>Pseudomonadati</taxon>
        <taxon>Pseudomonadota</taxon>
        <taxon>Gammaproteobacteria</taxon>
        <taxon>Vibrionales</taxon>
        <taxon>Vibrionaceae</taxon>
        <taxon>Vibrio</taxon>
    </lineage>
</organism>
<keyword id="KW-0975">Bacterial flagellum</keyword>
<keyword id="KW-0574">Periplasm</keyword>
<keyword id="KW-0732">Signal</keyword>
<comment type="function">
    <text evidence="1">Assembles around the rod to form the L-ring and probably protects the motor/basal body from shearing forces during rotation.</text>
</comment>
<comment type="subunit">
    <text evidence="1">The basal body constitutes a major portion of the flagellar organelle and consists of four rings (L,P,S, and M) mounted on a central rod.</text>
</comment>
<comment type="subcellular location">
    <subcellularLocation>
        <location evidence="1">Periplasm</location>
    </subcellularLocation>
    <subcellularLocation>
        <location evidence="1">Bacterial flagellum basal body</location>
    </subcellularLocation>
</comment>
<comment type="similarity">
    <text evidence="1">Belongs to the FlgI family.</text>
</comment>
<protein>
    <recommendedName>
        <fullName evidence="1">Flagellar P-ring protein</fullName>
    </recommendedName>
    <alternativeName>
        <fullName evidence="1">Basal body P-ring protein</fullName>
    </alternativeName>
</protein>